<keyword id="KW-1003">Cell membrane</keyword>
<keyword id="KW-0472">Membrane</keyword>
<keyword id="KW-0812">Transmembrane</keyword>
<keyword id="KW-1133">Transmembrane helix</keyword>
<comment type="subcellular location">
    <subcellularLocation>
        <location evidence="2">Cell membrane</location>
        <topology evidence="2">Multi-pass membrane protein</topology>
    </subcellularLocation>
</comment>
<comment type="similarity">
    <text evidence="2">Belongs to the UPF0421 family.</text>
</comment>
<accession>Q7A2R3</accession>
<organism>
    <name type="scientific">Staphylococcus aureus (strain Mu50 / ATCC 700699)</name>
    <dbReference type="NCBI Taxonomy" id="158878"/>
    <lineage>
        <taxon>Bacteria</taxon>
        <taxon>Bacillati</taxon>
        <taxon>Bacillota</taxon>
        <taxon>Bacilli</taxon>
        <taxon>Bacillales</taxon>
        <taxon>Staphylococcaceae</taxon>
        <taxon>Staphylococcus</taxon>
    </lineage>
</organism>
<feature type="chain" id="PRO_0000283017" description="UPF0421 protein SAV1889">
    <location>
        <begin position="1"/>
        <end position="328"/>
    </location>
</feature>
<feature type="transmembrane region" description="Helical" evidence="1">
    <location>
        <begin position="19"/>
        <end position="39"/>
    </location>
</feature>
<feature type="transmembrane region" description="Helical" evidence="1">
    <location>
        <begin position="61"/>
        <end position="81"/>
    </location>
</feature>
<feature type="transmembrane region" description="Helical" evidence="1">
    <location>
        <begin position="108"/>
        <end position="128"/>
    </location>
</feature>
<feature type="transmembrane region" description="Helical" evidence="1">
    <location>
        <begin position="132"/>
        <end position="152"/>
    </location>
</feature>
<dbReference type="EMBL" id="BA000017">
    <property type="protein sequence ID" value="BAB58051.1"/>
    <property type="molecule type" value="Genomic_DNA"/>
</dbReference>
<dbReference type="RefSeq" id="WP_000999717.1">
    <property type="nucleotide sequence ID" value="NC_002758.2"/>
</dbReference>
<dbReference type="SMR" id="Q7A2R3"/>
<dbReference type="KEGG" id="sav:SAV1889"/>
<dbReference type="HOGENOM" id="CLU_067028_0_0_9"/>
<dbReference type="PhylomeDB" id="Q7A2R3"/>
<dbReference type="Proteomes" id="UP000002481">
    <property type="component" value="Chromosome"/>
</dbReference>
<dbReference type="GO" id="GO:0005886">
    <property type="term" value="C:plasma membrane"/>
    <property type="evidence" value="ECO:0007669"/>
    <property type="project" value="UniProtKB-SubCell"/>
</dbReference>
<dbReference type="InterPro" id="IPR010343">
    <property type="entry name" value="ArAE_1"/>
</dbReference>
<dbReference type="PANTHER" id="PTHR31086">
    <property type="entry name" value="ALUMINUM-ACTIVATED MALATE TRANSPORTER 10"/>
    <property type="match status" value="1"/>
</dbReference>
<dbReference type="Pfam" id="PF06081">
    <property type="entry name" value="ArAE_1"/>
    <property type="match status" value="1"/>
</dbReference>
<gene>
    <name type="ordered locus">SAV1889</name>
</gene>
<name>Y1889_STAAM</name>
<proteinExistence type="inferred from homology"/>
<reference key="1">
    <citation type="journal article" date="2001" name="Lancet">
        <title>Whole genome sequencing of meticillin-resistant Staphylococcus aureus.</title>
        <authorList>
            <person name="Kuroda M."/>
            <person name="Ohta T."/>
            <person name="Uchiyama I."/>
            <person name="Baba T."/>
            <person name="Yuzawa H."/>
            <person name="Kobayashi I."/>
            <person name="Cui L."/>
            <person name="Oguchi A."/>
            <person name="Aoki K."/>
            <person name="Nagai Y."/>
            <person name="Lian J.-Q."/>
            <person name="Ito T."/>
            <person name="Kanamori M."/>
            <person name="Matsumaru H."/>
            <person name="Maruyama A."/>
            <person name="Murakami H."/>
            <person name="Hosoyama A."/>
            <person name="Mizutani-Ui Y."/>
            <person name="Takahashi N.K."/>
            <person name="Sawano T."/>
            <person name="Inoue R."/>
            <person name="Kaito C."/>
            <person name="Sekimizu K."/>
            <person name="Hirakawa H."/>
            <person name="Kuhara S."/>
            <person name="Goto S."/>
            <person name="Yabuzaki J."/>
            <person name="Kanehisa M."/>
            <person name="Yamashita A."/>
            <person name="Oshima K."/>
            <person name="Furuya K."/>
            <person name="Yoshino C."/>
            <person name="Shiba T."/>
            <person name="Hattori M."/>
            <person name="Ogasawara N."/>
            <person name="Hayashi H."/>
            <person name="Hiramatsu K."/>
        </authorList>
    </citation>
    <scope>NUCLEOTIDE SEQUENCE [LARGE SCALE GENOMIC DNA]</scope>
    <source>
        <strain>Mu50 / ATCC 700699</strain>
    </source>
</reference>
<sequence>MNDQWYKHLIGARTIKTGIAIFLTAVFCMALDLTPIYAILTAVVTIEPTAKASLIKGYRRLPATVIGAGFAVLFTYLFGDQSPFTYALSATFTILFCTKLKLQVGTNVAVLTSLAMIPGIHDAYIFNFLSRTLTAIIGLVTSGLINFMVFPPKYYGQVEEKLSKTDALMYKLFYNRCQELILSRLQSDKSEKAYKNIFNLNNQVETLISYQRDELSYHKKKECDWKLLNQLTKRAYTNRLFITHLSNIIYLPKNTRVNFSGDEKMALLKISSSIKDIFYDGTFKREDDSVETLRSTIKALEISGENQIKSHILYEVLMIYRLLDSRYA</sequence>
<protein>
    <recommendedName>
        <fullName>UPF0421 protein SAV1889</fullName>
    </recommendedName>
</protein>
<evidence type="ECO:0000255" key="1"/>
<evidence type="ECO:0000305" key="2"/>